<sequence>MKLSLSPPPYADAPVVVLISGLGGSGSYWLPQLAVLEQEYQVVCYDQRGTGNNPDTLAEDYSIAQMAAELHQALVAAGIEHYAVVGHALGALVGMQLALDYPASVTVLISVNGWLRINAHTRRCFQVRERLLYSGGAQAWVEAQPLFLYPADWMAARAPRLEAEDALALAHFQGKNNLLRRLNALKRADFSHHADRIRCPVQIICASDDLLVPTACSSELHAALPDSQKMVMPYGGHACNVTDPETFNALLLNGLASLLHHREAAL</sequence>
<feature type="chain" id="PRO_0000402942" description="Putative carbamate hydrolase RutD">
    <location>
        <begin position="1"/>
        <end position="266"/>
    </location>
</feature>
<organism>
    <name type="scientific">Escherichia coli (strain K12 / DH10B)</name>
    <dbReference type="NCBI Taxonomy" id="316385"/>
    <lineage>
        <taxon>Bacteria</taxon>
        <taxon>Pseudomonadati</taxon>
        <taxon>Pseudomonadota</taxon>
        <taxon>Gammaproteobacteria</taxon>
        <taxon>Enterobacterales</taxon>
        <taxon>Enterobacteriaceae</taxon>
        <taxon>Escherichia</taxon>
    </lineage>
</organism>
<name>RUTD_ECODH</name>
<proteinExistence type="inferred from homology"/>
<keyword id="KW-0378">Hydrolase</keyword>
<dbReference type="EC" id="3.5.1.-" evidence="1"/>
<dbReference type="EMBL" id="CP000948">
    <property type="protein sequence ID" value="ACB02210.1"/>
    <property type="molecule type" value="Genomic_DNA"/>
</dbReference>
<dbReference type="RefSeq" id="WP_000777653.1">
    <property type="nucleotide sequence ID" value="NC_010473.1"/>
</dbReference>
<dbReference type="SMR" id="B1X9D0"/>
<dbReference type="ESTHER" id="ecoli-rutD">
    <property type="family name" value="RutD"/>
</dbReference>
<dbReference type="KEGG" id="ecd:ECDH10B_1081"/>
<dbReference type="HOGENOM" id="CLU_020336_50_1_6"/>
<dbReference type="GO" id="GO:0016811">
    <property type="term" value="F:hydrolase activity, acting on carbon-nitrogen (but not peptide) bonds, in linear amides"/>
    <property type="evidence" value="ECO:0007669"/>
    <property type="project" value="InterPro"/>
</dbReference>
<dbReference type="GO" id="GO:0019740">
    <property type="term" value="P:nitrogen utilization"/>
    <property type="evidence" value="ECO:0007669"/>
    <property type="project" value="UniProtKB-UniRule"/>
</dbReference>
<dbReference type="GO" id="GO:0006212">
    <property type="term" value="P:uracil catabolic process"/>
    <property type="evidence" value="ECO:0007669"/>
    <property type="project" value="UniProtKB-UniRule"/>
</dbReference>
<dbReference type="FunFam" id="3.40.50.1820:FF:000052">
    <property type="entry name" value="Putative aminoacrylate hydrolase RutD"/>
    <property type="match status" value="1"/>
</dbReference>
<dbReference type="Gene3D" id="3.40.50.1820">
    <property type="entry name" value="alpha/beta hydrolase"/>
    <property type="match status" value="1"/>
</dbReference>
<dbReference type="HAMAP" id="MF_00832">
    <property type="entry name" value="RutD"/>
    <property type="match status" value="1"/>
</dbReference>
<dbReference type="InterPro" id="IPR000073">
    <property type="entry name" value="AB_hydrolase_1"/>
</dbReference>
<dbReference type="InterPro" id="IPR029058">
    <property type="entry name" value="AB_hydrolase_fold"/>
</dbReference>
<dbReference type="InterPro" id="IPR050266">
    <property type="entry name" value="AB_hydrolase_sf"/>
</dbReference>
<dbReference type="InterPro" id="IPR019913">
    <property type="entry name" value="Pyrimidine_utilisation_RutD"/>
</dbReference>
<dbReference type="NCBIfam" id="TIGR03611">
    <property type="entry name" value="RutD"/>
    <property type="match status" value="1"/>
</dbReference>
<dbReference type="PANTHER" id="PTHR43798">
    <property type="entry name" value="MONOACYLGLYCEROL LIPASE"/>
    <property type="match status" value="1"/>
</dbReference>
<dbReference type="Pfam" id="PF00561">
    <property type="entry name" value="Abhydrolase_1"/>
    <property type="match status" value="1"/>
</dbReference>
<dbReference type="PRINTS" id="PR00111">
    <property type="entry name" value="ABHYDROLASE"/>
</dbReference>
<dbReference type="SUPFAM" id="SSF53474">
    <property type="entry name" value="alpha/beta-Hydrolases"/>
    <property type="match status" value="1"/>
</dbReference>
<reference key="1">
    <citation type="journal article" date="2008" name="J. Bacteriol.">
        <title>The complete genome sequence of Escherichia coli DH10B: insights into the biology of a laboratory workhorse.</title>
        <authorList>
            <person name="Durfee T."/>
            <person name="Nelson R."/>
            <person name="Baldwin S."/>
            <person name="Plunkett G. III"/>
            <person name="Burland V."/>
            <person name="Mau B."/>
            <person name="Petrosino J.F."/>
            <person name="Qin X."/>
            <person name="Muzny D.M."/>
            <person name="Ayele M."/>
            <person name="Gibbs R.A."/>
            <person name="Csorgo B."/>
            <person name="Posfai G."/>
            <person name="Weinstock G.M."/>
            <person name="Blattner F.R."/>
        </authorList>
    </citation>
    <scope>NUCLEOTIDE SEQUENCE [LARGE SCALE GENOMIC DNA]</scope>
    <source>
        <strain>K12 / DH10B</strain>
    </source>
</reference>
<gene>
    <name evidence="1" type="primary">rutD</name>
    <name type="ordered locus">ECDH10B_1081</name>
</gene>
<evidence type="ECO:0000255" key="1">
    <source>
        <dbReference type="HAMAP-Rule" id="MF_00832"/>
    </source>
</evidence>
<protein>
    <recommendedName>
        <fullName evidence="1">Putative carbamate hydrolase RutD</fullName>
        <ecNumber evidence="1">3.5.1.-</ecNumber>
    </recommendedName>
    <alternativeName>
        <fullName evidence="1">Aminohydrolase</fullName>
    </alternativeName>
</protein>
<comment type="function">
    <text evidence="1">Involved in pyrimidine catabolism. May facilitate the hydrolysis of carbamate, a reaction that can also occur spontaneously.</text>
</comment>
<comment type="catalytic activity">
    <reaction evidence="1">
        <text>carbamate + 2 H(+) = NH4(+) + CO2</text>
        <dbReference type="Rhea" id="RHEA:15649"/>
        <dbReference type="ChEBI" id="CHEBI:13941"/>
        <dbReference type="ChEBI" id="CHEBI:15378"/>
        <dbReference type="ChEBI" id="CHEBI:16526"/>
        <dbReference type="ChEBI" id="CHEBI:28938"/>
    </reaction>
</comment>
<comment type="similarity">
    <text evidence="1">Belongs to the AB hydrolase superfamily. Hydrolase RutD family.</text>
</comment>
<accession>B1X9D0</accession>